<evidence type="ECO:0000250" key="1">
    <source>
        <dbReference type="UniProtKB" id="P15145"/>
    </source>
</evidence>
<evidence type="ECO:0000250" key="2">
    <source>
        <dbReference type="UniProtKB" id="P97449"/>
    </source>
</evidence>
<evidence type="ECO:0000255" key="3"/>
<evidence type="ECO:0000255" key="4">
    <source>
        <dbReference type="PROSITE-ProRule" id="PRU10095"/>
    </source>
</evidence>
<evidence type="ECO:0000256" key="5">
    <source>
        <dbReference type="SAM" id="MobiDB-lite"/>
    </source>
</evidence>
<evidence type="ECO:0000269" key="6">
    <source>
    </source>
</evidence>
<evidence type="ECO:0000269" key="7">
    <source>
    </source>
</evidence>
<evidence type="ECO:0000269" key="8">
    <source>
    </source>
</evidence>
<evidence type="ECO:0000269" key="9">
    <source>
    </source>
</evidence>
<evidence type="ECO:0000269" key="10">
    <source>
    </source>
</evidence>
<evidence type="ECO:0000269" key="11">
    <source>
    </source>
</evidence>
<evidence type="ECO:0000269" key="12">
    <source>
    </source>
</evidence>
<evidence type="ECO:0000269" key="13">
    <source>
    </source>
</evidence>
<evidence type="ECO:0000269" key="14">
    <source>
    </source>
</evidence>
<evidence type="ECO:0000269" key="15">
    <source>
    </source>
</evidence>
<evidence type="ECO:0000269" key="16">
    <source>
    </source>
</evidence>
<evidence type="ECO:0000269" key="17">
    <source>
    </source>
</evidence>
<evidence type="ECO:0000269" key="18">
    <source>
    </source>
</evidence>
<evidence type="ECO:0000269" key="19">
    <source>
    </source>
</evidence>
<evidence type="ECO:0000269" key="20">
    <source>
    </source>
</evidence>
<evidence type="ECO:0000269" key="21">
    <source>
    </source>
</evidence>
<evidence type="ECO:0000269" key="22">
    <source>
    </source>
</evidence>
<evidence type="ECO:0000269" key="23">
    <source>
    </source>
</evidence>
<evidence type="ECO:0000269" key="24">
    <source>
    </source>
</evidence>
<evidence type="ECO:0000269" key="25">
    <source>
    </source>
</evidence>
<evidence type="ECO:0000269" key="26">
    <source>
    </source>
</evidence>
<evidence type="ECO:0000269" key="27">
    <source>
    </source>
</evidence>
<evidence type="ECO:0000269" key="28">
    <source>
    </source>
</evidence>
<evidence type="ECO:0000269" key="29">
    <source ref="6"/>
</evidence>
<evidence type="ECO:0000305" key="30"/>
<evidence type="ECO:0000305" key="31">
    <source>
    </source>
</evidence>
<evidence type="ECO:0007744" key="32">
    <source>
        <dbReference type="PDB" id="4FYQ"/>
    </source>
</evidence>
<evidence type="ECO:0007744" key="33">
    <source>
        <dbReference type="PDB" id="4FYR"/>
    </source>
</evidence>
<evidence type="ECO:0007744" key="34">
    <source>
        <dbReference type="PDB" id="4FYT"/>
    </source>
</evidence>
<evidence type="ECO:0007829" key="35">
    <source>
        <dbReference type="PDB" id="4FYT"/>
    </source>
</evidence>
<evidence type="ECO:0007829" key="36">
    <source>
        <dbReference type="PDB" id="5LHD"/>
    </source>
</evidence>
<evidence type="ECO:0007829" key="37">
    <source>
        <dbReference type="PDB" id="7VPQ"/>
    </source>
</evidence>
<proteinExistence type="evidence at protein level"/>
<reference key="1">
    <citation type="journal article" date="1988" name="FEBS Lett.">
        <title>Complete amino acid sequence of human intestinal aminopeptidase N as deduced from cloned cDNA.</title>
        <authorList>
            <person name="Olsen J."/>
            <person name="Cowell G.M."/>
            <person name="Koenigshoefer E."/>
            <person name="Danielsen E.M."/>
            <person name="Moeller J."/>
            <person name="Laustsen L."/>
            <person name="Hansen O.C."/>
            <person name="Welinder K.G."/>
            <person name="Engberg J."/>
            <person name="Hunziker W."/>
            <person name="Spiess M."/>
            <person name="Sjoestroem H."/>
            <person name="Noren O."/>
        </authorList>
    </citation>
    <scope>NUCLEOTIDE SEQUENCE [MRNA]</scope>
    <scope>VARIANTS GLN-86 AND MET-603</scope>
    <source>
        <tissue>Intestine</tissue>
    </source>
</reference>
<reference key="2">
    <citation type="journal article" date="1989" name="J. Clin. Invest.">
        <title>Human myeloid plasma membrane glycoprotein CD13 (gp150) is identical to aminopeptidase N.</title>
        <authorList>
            <person name="Look A.T."/>
            <person name="Ashmun R.A."/>
            <person name="Shapiro L.H."/>
            <person name="Peiper S.C."/>
        </authorList>
    </citation>
    <scope>NUCLEOTIDE SEQUENCE [MRNA]</scope>
    <scope>PROTEIN SEQUENCE OF 2-21</scope>
    <scope>VARIANT GLN-86</scope>
    <scope>SUBCELLULAR LOCATION</scope>
</reference>
<reference key="3">
    <citation type="journal article" date="2006" name="Nature">
        <title>Analysis of the DNA sequence and duplication history of human chromosome 15.</title>
        <authorList>
            <person name="Zody M.C."/>
            <person name="Garber M."/>
            <person name="Sharpe T."/>
            <person name="Young S.K."/>
            <person name="Rowen L."/>
            <person name="O'Neill K."/>
            <person name="Whittaker C.A."/>
            <person name="Kamal M."/>
            <person name="Chang J.L."/>
            <person name="Cuomo C.A."/>
            <person name="Dewar K."/>
            <person name="FitzGerald M.G."/>
            <person name="Kodira C.D."/>
            <person name="Madan A."/>
            <person name="Qin S."/>
            <person name="Yang X."/>
            <person name="Abbasi N."/>
            <person name="Abouelleil A."/>
            <person name="Arachchi H.M."/>
            <person name="Baradarani L."/>
            <person name="Birditt B."/>
            <person name="Bloom S."/>
            <person name="Bloom T."/>
            <person name="Borowsky M.L."/>
            <person name="Burke J."/>
            <person name="Butler J."/>
            <person name="Cook A."/>
            <person name="DeArellano K."/>
            <person name="DeCaprio D."/>
            <person name="Dorris L. III"/>
            <person name="Dors M."/>
            <person name="Eichler E.E."/>
            <person name="Engels R."/>
            <person name="Fahey J."/>
            <person name="Fleetwood P."/>
            <person name="Friedman C."/>
            <person name="Gearin G."/>
            <person name="Hall J.L."/>
            <person name="Hensley G."/>
            <person name="Johnson E."/>
            <person name="Jones C."/>
            <person name="Kamat A."/>
            <person name="Kaur A."/>
            <person name="Locke D.P."/>
            <person name="Madan A."/>
            <person name="Munson G."/>
            <person name="Jaffe D.B."/>
            <person name="Lui A."/>
            <person name="Macdonald P."/>
            <person name="Mauceli E."/>
            <person name="Naylor J.W."/>
            <person name="Nesbitt R."/>
            <person name="Nicol R."/>
            <person name="O'Leary S.B."/>
            <person name="Ratcliffe A."/>
            <person name="Rounsley S."/>
            <person name="She X."/>
            <person name="Sneddon K.M.B."/>
            <person name="Stewart S."/>
            <person name="Sougnez C."/>
            <person name="Stone S.M."/>
            <person name="Topham K."/>
            <person name="Vincent D."/>
            <person name="Wang S."/>
            <person name="Zimmer A.R."/>
            <person name="Birren B.W."/>
            <person name="Hood L."/>
            <person name="Lander E.S."/>
            <person name="Nusbaum C."/>
        </authorList>
    </citation>
    <scope>NUCLEOTIDE SEQUENCE [LARGE SCALE GENOMIC DNA]</scope>
</reference>
<reference key="4">
    <citation type="journal article" date="2004" name="Genome Res.">
        <title>The status, quality, and expansion of the NIH full-length cDNA project: the Mammalian Gene Collection (MGC).</title>
        <authorList>
            <consortium name="The MGC Project Team"/>
        </authorList>
    </citation>
    <scope>NUCLEOTIDE SEQUENCE [LARGE SCALE MRNA]</scope>
    <source>
        <tissue>Pancreas</tissue>
    </source>
</reference>
<reference key="5">
    <citation type="journal article" date="1991" name="J. Biol. Chem.">
        <title>Separate promoters control transcription of the human aminopeptidase N gene in myeloid and intestinal epithelial cells.</title>
        <authorList>
            <person name="Shapiro L.H."/>
            <person name="Ashmun R.A."/>
            <person name="Roberts W.M."/>
            <person name="Look A.T."/>
        </authorList>
    </citation>
    <scope>NUCLEOTIDE SEQUENCE [GENOMIC DNA] OF 1-15</scope>
    <source>
        <tissue>Intestinal epithelium</tissue>
    </source>
</reference>
<reference key="6">
    <citation type="submission" date="2002-01" db="EMBL/GenBank/DDBJ databases">
        <title>Genomic organisation of aminopeptidase N.</title>
        <authorList>
            <person name="Eiz-Vesper B."/>
            <person name="Fuchs N."/>
            <person name="Gottschalk D."/>
            <person name="Mueller K."/>
            <person name="Reuter S."/>
            <person name="Blasczyk R."/>
        </authorList>
    </citation>
    <scope>NUCLEOTIDE SEQUENCE [GENOMIC DNA] OF 1-479 AND 524-967</scope>
    <scope>VARIANT GLN-86</scope>
    <source>
        <tissue>Peripheral blood</tissue>
    </source>
</reference>
<reference key="7">
    <citation type="journal article" date="1995" name="Biol. Chem. Hoppe-Seyler">
        <title>Identification of an alanine aminopeptidase in human maternal serum as a membrane-bound aminopeptidase N.</title>
        <authorList>
            <person name="Watanabe Y."/>
            <person name="Iwaki-Egawa S."/>
            <person name="Mizukoshi H."/>
            <person name="Fujimoto Y."/>
        </authorList>
    </citation>
    <scope>PROTEIN SEQUENCE OF 2-20 AND 70-81</scope>
    <scope>FUNCTION</scope>
    <scope>CATALYTIC ACTIVITY</scope>
</reference>
<reference key="8">
    <citation type="journal article" date="1993" name="FEBS Lett.">
        <title>Cholesterol crystallization-promoting activity of aminopeptidase-N isolated from the vesicular carrier of biliary lipids.</title>
        <authorList>
            <person name="Nunez L."/>
            <person name="Amigo L."/>
            <person name="Rigotti A."/>
            <person name="Puglielli L."/>
            <person name="Mingrone G."/>
            <person name="Greco A.V."/>
            <person name="Nervi F."/>
        </authorList>
    </citation>
    <scope>PROTEIN SEQUENCE OF 2-18</scope>
    <scope>FUNCTION</scope>
</reference>
<reference key="9">
    <citation type="journal article" date="1984" name="Enzyme">
        <title>Purification and characterization of aminopeptidase N from human plasma.</title>
        <authorList>
            <person name="Tokioka-Terao M."/>
            <person name="Hiwada K."/>
            <person name="Kokubu T."/>
        </authorList>
    </citation>
    <scope>CATALYTIC ACTIVITY</scope>
    <scope>CHARACTERIZATION</scope>
    <scope>SUBUNIT</scope>
</reference>
<reference key="10">
    <citation type="journal article" date="1991" name="J. Biol. Chem.">
        <title>Variable O-glycosylation of CD13 (aminopeptidase N).</title>
        <authorList>
            <person name="O'Connell P.J."/>
            <person name="Gerkis V."/>
            <person name="d'Apice A.J.F."/>
        </authorList>
    </citation>
    <scope>GLYCOSYLATION</scope>
</reference>
<reference key="11">
    <citation type="journal article" date="1992" name="Nature">
        <title>Human aminopeptidase N is a receptor for human coronavirus 229E.</title>
        <authorList>
            <person name="Yeager C.L."/>
            <person name="Ashmun R.A."/>
            <person name="Williams R.K."/>
            <person name="Cardellichio C.B."/>
            <person name="Shapiro L.H."/>
            <person name="Look A.T."/>
            <person name="Holmes K.V."/>
        </authorList>
    </citation>
    <scope>FUNCTION (MICROBIAL INFECTION)</scope>
    <scope>INTERACTION WITH HCOV-229E SPIKE GLYCOPROTEIN (MICROBIAL INFECTION)</scope>
    <scope>TOPOLOGY</scope>
</reference>
<reference key="12">
    <citation type="journal article" date="1993" name="Exp. Hematol.">
        <title>CD13 (GP150; aminopeptidase-N): predominant functional activity in blood is localized to plasma and is not cell-surface associated.</title>
        <authorList>
            <person name="Favaloro E.J."/>
            <person name="Browning T."/>
            <person name="Facey D."/>
        </authorList>
    </citation>
    <scope>IDENTIFICATION OF SOLUBLE FORM</scope>
    <scope>TISSUE SPECIFICITY</scope>
</reference>
<reference key="13">
    <citation type="journal article" date="1993" name="J. Virol.">
        <title>CD13 (human aminopeptidase N) mediates human cytomegalovirus infection.</title>
        <authorList>
            <person name="Soderberg C."/>
            <person name="Giugni T.D."/>
            <person name="Zaia J.A."/>
            <person name="Larsson S."/>
            <person name="Wahlberg J.M."/>
            <person name="Moller E."/>
        </authorList>
    </citation>
    <scope>FUNCTION (MICROBIAL INFECTION)</scope>
</reference>
<reference key="14">
    <citation type="journal article" date="1996" name="J. Gen. Virol.">
        <title>Characterization of functional domains in the human coronavirus HCV 229E receptor.</title>
        <authorList>
            <person name="Kolb A.F."/>
            <person name="Maile J."/>
            <person name="Heister A."/>
            <person name="Siddell S.G."/>
        </authorList>
    </citation>
    <scope>CATALYTIC ACTIVITY</scope>
    <scope>FUNCTION (MICROBIAL INFECTION)</scope>
    <scope>INTERACTION WITH HCOV-229E SPIKE GLYCOPROTEIN (MICROBIAL INFECTION)</scope>
    <scope>REGION</scope>
    <scope>MUTAGENESIS OF HIS-392</scope>
</reference>
<reference key="15">
    <citation type="journal article" date="1997" name="Exp. Cell Res.">
        <title>Defectively N-glycosylated and non-O-glycosylated aminopeptidase N (CD13) is normally expressed at the cell surface and has full enzymatic activity.</title>
        <authorList>
            <person name="Noren K."/>
            <person name="Hansen G.H."/>
            <person name="Clausen H."/>
            <person name="Noren O."/>
            <person name="Sjostrom H."/>
            <person name="Vogel L.K."/>
        </authorList>
    </citation>
    <scope>FUNCTION</scope>
    <scope>GLYCOSYLATION</scope>
    <scope>SUBCELLULAR LOCATION</scope>
</reference>
<reference key="16">
    <citation type="journal article" date="1997" name="J. Gen. Virol.">
        <title>Identification of residues critical for the human coronavirus 229E receptor function of human aminopeptidase N.</title>
        <authorList>
            <person name="Kolb A.F."/>
            <person name="Hegyi A."/>
            <person name="Siddell S.G."/>
        </authorList>
    </citation>
    <scope>FUNCTION (MICROBIAL INFECTION)</scope>
    <scope>INTERACTION WITH HCOV-229E SPIKE GLYCOPROTEIN (MICROBIAL INFECTION)</scope>
    <scope>REGION</scope>
</reference>
<reference key="17">
    <citation type="journal article" date="2000" name="J. Immunol.">
        <title>Modification of the amino terminus of a class II epitope confers resistance to degradation by CD13 on dendritic cells and enhances presentation to T cells.</title>
        <authorList>
            <person name="Dong X."/>
            <person name="An B."/>
            <person name="Salvucci Kierstead L."/>
            <person name="Storkus W.J."/>
            <person name="Amoscato A.A."/>
            <person name="Salter R.D."/>
        </authorList>
    </citation>
    <scope>FUNCTION</scope>
    <scope>ENZYMATIC CLEAVAGE OF ANTIGEN PEPTIDES BOUND TO CLASS II MHC</scope>
</reference>
<reference key="18">
    <citation type="journal article" date="2000" name="Cancer Res.">
        <title>Aminopeptidase N is a receptor for tumor-homing peptides and a target for inhibiting angiogenesis.</title>
        <authorList>
            <person name="Pasqualini R."/>
            <person name="Koivunen E."/>
            <person name="Kain R."/>
            <person name="Lahdenranta J."/>
            <person name="Sakamoto M."/>
            <person name="Stryhn A."/>
            <person name="Ashmun R.A."/>
            <person name="Shapiro L.H."/>
            <person name="Arap W."/>
            <person name="Ruoslahti E."/>
        </authorList>
    </citation>
    <scope>ROLE IN ANGIOGENESIS</scope>
    <scope>CHARACTERIZATION OF RECEPTOR FOR TUMOR-HOMING PEPTIDES FUNCTION</scope>
</reference>
<reference key="19">
    <citation type="journal article" date="2001" name="Fertil. Steril.">
        <title>Expression of aminopeptidase N in human endometrium and regulation of its activity by estrogen.</title>
        <authorList>
            <person name="Seli E."/>
            <person name="Senturk L.M."/>
            <person name="Bahtiyar O.M."/>
            <person name="Kayisli U.A."/>
            <person name="Arici A."/>
        </authorList>
    </citation>
    <scope>FUNCTION</scope>
    <scope>INDUCTION BY ESTRADIOL AND IL8</scope>
</reference>
<reference key="20">
    <citation type="journal article" date="2001" name="J. Virol.">
        <title>Molecular determinants of species specificity in the coronavirus receptor aminopeptidase N (CD13): influence of N-linked glycosylation.</title>
        <authorList>
            <person name="Wentworth D.E."/>
            <person name="Holmes K.V."/>
        </authorList>
    </citation>
    <scope>MUTAGENESIS OF 288-ASP--SER-295 AND ASN-818</scope>
</reference>
<reference key="21">
    <citation type="journal article" date="2002" name="Clin. Cancer Res.">
        <title>Soluble aminopeptidase N/CD13 in malignant and nonmalignant effusions and intratumoral fluid.</title>
        <authorList>
            <person name="van Hensbergen Y."/>
            <person name="Broxterman H.J."/>
            <person name="Hanemaaijer R."/>
            <person name="Jorna A.S."/>
            <person name="van Lent N.A."/>
            <person name="Verheul H.M."/>
            <person name="Pinedo H.M."/>
            <person name="Hoekman K."/>
        </authorList>
    </citation>
    <scope>FUNCTION OF SOLUBLE FORM</scope>
</reference>
<reference key="22">
    <citation type="journal article" date="2003" name="J. Virol.">
        <title>Identification of a receptor-binding domain of the spike glycoprotein of human coronavirus HCoV-229E.</title>
        <authorList>
            <person name="Bonavia A."/>
            <person name="Zelus B.D."/>
            <person name="Wentworth D.E."/>
            <person name="Talbot P.J."/>
            <person name="Holmes K.V."/>
        </authorList>
    </citation>
    <scope>FUNCTION (MICROBIAL INFECTION)</scope>
    <scope>INTERACTION WITH HCOV-229E SPIKE GLYCOPROTEIN</scope>
</reference>
<reference key="23">
    <citation type="journal article" date="2004" name="Mol. Cell. Proteomics">
        <title>A proteomic analysis of human bile.</title>
        <authorList>
            <person name="Kristiansen T.Z."/>
            <person name="Bunkenborg J."/>
            <person name="Gronborg M."/>
            <person name="Molina H."/>
            <person name="Thuluvath P.J."/>
            <person name="Argani P."/>
            <person name="Goggins M.G."/>
            <person name="Maitra A."/>
            <person name="Pandey A."/>
        </authorList>
    </citation>
    <scope>GLYCOSYLATION [LARGE SCALE ANALYSIS] AT ASN-265</scope>
    <source>
        <tissue>Bile</tissue>
    </source>
</reference>
<reference key="24">
    <citation type="journal article" date="2005" name="J. Proteome Res.">
        <title>Human plasma N-glycoproteome analysis by immunoaffinity subtraction, hydrazide chemistry, and mass spectrometry.</title>
        <authorList>
            <person name="Liu T."/>
            <person name="Qian W.-J."/>
            <person name="Gritsenko M.A."/>
            <person name="Camp D.G. II"/>
            <person name="Monroe M.E."/>
            <person name="Moore R.J."/>
            <person name="Smith R.D."/>
        </authorList>
    </citation>
    <scope>GLYCOSYLATION [LARGE SCALE ANALYSIS] AT ASN-128; ASN-234; ASN-265; ASN-681 AND ASN-818</scope>
    <source>
        <tissue>Plasma</tissue>
    </source>
</reference>
<reference key="25">
    <citation type="journal article" date="2009" name="J. Proteome Res.">
        <title>Glycoproteomics analysis of human liver tissue by combination of multiple enzyme digestion and hydrazide chemistry.</title>
        <authorList>
            <person name="Chen R."/>
            <person name="Jiang X."/>
            <person name="Sun D."/>
            <person name="Han G."/>
            <person name="Wang F."/>
            <person name="Ye M."/>
            <person name="Wang L."/>
            <person name="Zou H."/>
        </authorList>
    </citation>
    <scope>GLYCOSYLATION [LARGE SCALE ANALYSIS] AT ASN-128; ASN-234; ASN-265; ASN-573; ASN-681 AND ASN-818</scope>
    <source>
        <tissue>Liver</tissue>
    </source>
</reference>
<reference key="26">
    <citation type="journal article" date="2011" name="BMC Syst. Biol.">
        <title>Initial characterization of the human central proteome.</title>
        <authorList>
            <person name="Burkard T.R."/>
            <person name="Planyavsky M."/>
            <person name="Kaupe I."/>
            <person name="Breitwieser F.P."/>
            <person name="Buerckstuemmer T."/>
            <person name="Bennett K.L."/>
            <person name="Superti-Furga G."/>
            <person name="Colinge J."/>
        </authorList>
    </citation>
    <scope>IDENTIFICATION BY MASS SPECTROMETRY [LARGE SCALE ANALYSIS]</scope>
</reference>
<reference key="27">
    <citation type="journal article" date="2014" name="J. Proteomics">
        <title>An enzyme assisted RP-RPLC approach for in-depth analysis of human liver phosphoproteome.</title>
        <authorList>
            <person name="Bian Y."/>
            <person name="Song C."/>
            <person name="Cheng K."/>
            <person name="Dong M."/>
            <person name="Wang F."/>
            <person name="Huang J."/>
            <person name="Sun D."/>
            <person name="Wang L."/>
            <person name="Ye M."/>
            <person name="Zou H."/>
        </authorList>
    </citation>
    <scope>IDENTIFICATION BY MASS SPECTROMETRY [LARGE SCALE ANALYSIS]</scope>
    <source>
        <tissue>Liver</tissue>
    </source>
</reference>
<reference key="28">
    <citation type="journal article" date="2015" name="Proteomics">
        <title>N-terminome analysis of the human mitochondrial proteome.</title>
        <authorList>
            <person name="Vaca Jacome A.S."/>
            <person name="Rabilloud T."/>
            <person name="Schaeffer-Reiss C."/>
            <person name="Rompais M."/>
            <person name="Ayoub D."/>
            <person name="Lane L."/>
            <person name="Bairoch A."/>
            <person name="Van Dorsselaer A."/>
            <person name="Carapito C."/>
        </authorList>
    </citation>
    <scope>IDENTIFICATION BY MASS SPECTROMETRY [LARGE SCALE ANALYSIS]</scope>
</reference>
<reference key="29">
    <citation type="journal article" date="2012" name="J. Biol. Chem.">
        <title>The X-ray crystal structure of human aminopeptidase N reveals a novel dimer and the basis for peptide processing.</title>
        <authorList>
            <person name="Wong A.H."/>
            <person name="Zhou D."/>
            <person name="Rini J.M."/>
        </authorList>
    </citation>
    <scope>X-RAY CRYSTALLOGRAPHY (1.85 ANGSTROMS) OF 66-967 IN COMPLEX WITH ANGIOTENSIN-4 AND INHIBITORS</scope>
    <scope>CATALYTIC ACTIVITY</scope>
    <scope>COFACTOR</scope>
    <scope>SUBSTRATE-BINDING REGION</scope>
    <scope>ZINC-BINDING SITES</scope>
    <scope>ACTIVE SITE</scope>
    <scope>GLYCOSYLATION AT ASN-128; ASN-234; ASN-265; ASN-319; ASN-527; ASN-625; ASN-681 AND ASN-818</scope>
    <scope>SUBUNIT</scope>
    <scope>DISULFIDE BONDS</scope>
</reference>
<reference key="30">
    <citation type="journal article" date="1998" name="Hum. Mutat. Suppl.">
        <title>Identification of point mutations in the aminopeptidase N gene by SSCP analysis and sequencing.</title>
        <authorList>
            <person name="Lendeckel U."/>
            <person name="Wex T."/>
            <person name="Arndt M."/>
            <person name="Frank K."/>
            <person name="Franke A."/>
            <person name="Ansorge S."/>
        </authorList>
    </citation>
    <scope>VARIANTS TYR-242 AND PRO-243</scope>
</reference>
<sequence>MAKGFYISKSLGILGILLGVAAVCTIIALSVVYSQEKNKNANSSPVASTTPSASATTNPASATTLDQSKAWNRYRLPNTLKPDSYRVTLRPYLTPNDRGLYVFKGSSTVRFTCKEATDVIIIHSKKLNYTLSQGHRVVLRGVGGSQPPDIDKTELVEPTEYLVVHLKGSLVKDSQYEMDSEFEGELADDLAGFYRSEYMEGNVRKVVATTQMQAADARKSFPCFDEPAMKAEFNITLIHPKDLTALSNMLPKGPSTPLPEDPNWNVTEFHTTPKMSTYLLAFIVSEFDYVEKQASNGVLIRIWARPSAIAAGHGDYALNVTGPILNFFAGHYDTPYPLPKSDQIGLPDFNAGAMENWGLVTYRENSLLFDPLSSSSSNKERVVTVIAHELAHQWFGNLVTIEWWNDLWLNEGFASYVEYLGADYAEPTWNLKDLMVLNDVYRVMAVDALASSHPLSTPASEINTPAQISELFDAISYSKGASVLRMLSSFLSEDVFKQGLASYLHTFAYQNTIYLNLWDHLQEAVNNRSIQLPTTVRDIMNRWTLQMGFPVITVDTSTGTLSQEHFLLDPDSNVTRPSEFNYVWIVPITSIRDGRQQQDYWLIDVRAQNDLFSTSGNEWVLLNLNVTGYYRVNYDEENWRKIQTQLQRDHSAIPVINRAQIINDAFNLASAHKVPVTLALNNTLFLIEERQYMPWEAALSSLSYFKLMFDRSEVYGPMKNYLKKQVTPLFIHFRNNTNNWREIPENLMDQYSEVNAISTACSNGVPECEEMVSGLFKQWMENPNNNPIHPNLRSTVYCNAIAQGGEEEWDFAWEQFRNATLVNEADKLRAALACSKELWILNRYLSYTLNPDLIRKQDATSTIISITNNVIGQGLVWDFVQSNWKKLFNDYGGGSFSFSNLIQAVTRRFSTEYELQQLEQFKKDNEETGFGSGTRALEQALEKTKANIKWVKENKEVVLQWFTENSK</sequence>
<protein>
    <recommendedName>
        <fullName evidence="30">Aminopeptidase N</fullName>
        <shortName>AP-N</shortName>
        <shortName>hAPN</shortName>
        <ecNumber evidence="17 20 21 25">3.4.11.2</ecNumber>
    </recommendedName>
    <alternativeName>
        <fullName>Alanyl aminopeptidase</fullName>
    </alternativeName>
    <alternativeName>
        <fullName>Aminopeptidase M</fullName>
        <shortName>AP-M</shortName>
    </alternativeName>
    <alternativeName>
        <fullName>Microsomal aminopeptidase</fullName>
    </alternativeName>
    <alternativeName>
        <fullName>Myeloid plasma membrane glycoprotein CD13</fullName>
    </alternativeName>
    <alternativeName>
        <fullName>gp150</fullName>
    </alternativeName>
    <cdAntigenName>CD13</cdAntigenName>
</protein>
<gene>
    <name type="primary">ANPEP</name>
    <name type="synonym">APN</name>
    <name type="synonym">CD13</name>
    <name type="synonym">PEPN</name>
</gene>
<comment type="function">
    <text evidence="2 6 7 8 10 21 23 26">Broad specificity aminopeptidase which plays a role in the final digestion of peptides generated from hydrolysis of proteins by gastric and pancreatic proteases. Also involved in the processing of various peptides including peptide hormones, such as angiotensin III and IV, neuropeptides, and chemokines. May also be involved the cleavage of peptides bound to major histocompatibility complex class II molecules of antigen presenting cells. May have a role in angiogenesis and promote cholesterol crystallization. May have a role in amino acid transport by acting as binding partner of amino acid transporter SLC6A19 and regulating its activity (By similarity).</text>
</comment>
<comment type="function">
    <text evidence="11 12 25 27">(Microbial infection) Acts as a receptor for human coronavirus 229E/HCoV-229E. In case of human coronavirus 229E (HCoV-229E) infection, serves as receptor for HCoV-229E spike glycoprotein.</text>
</comment>
<comment type="function">
    <text evidence="24">(Microbial infection) Mediates as well Human cytomegalovirus (HCMV) infection.</text>
</comment>
<comment type="catalytic activity">
    <reaction evidence="17 20 21 25">
        <text>Release of an N-terminal amino acid, Xaa-|-Yaa- from a peptide, amide or arylamide. Xaa is preferably Ala, but may be most amino acids including Pro (slow action). When a terminal hydrophobic residue is followed by a prolyl residue, the two may be released as an intact Xaa-Pro dipeptide.</text>
        <dbReference type="EC" id="3.4.11.2"/>
    </reaction>
</comment>
<comment type="cofactor">
    <cofactor evidence="17">
        <name>Zn(2+)</name>
        <dbReference type="ChEBI" id="CHEBI:29105"/>
    </cofactor>
    <text evidence="17">Binds 1 zinc ion per subunit.</text>
</comment>
<comment type="subunit">
    <text evidence="2 17 20">Homodimer. Interacts with SLC6A19 (By similarity).</text>
</comment>
<comment type="subunit">
    <text evidence="11 12 25">(Microbial infection) Interacts with the S1 domain of human coronavirus 229E/HCoV-229E spike protein.</text>
</comment>
<comment type="subcellular location">
    <subcellularLocation>
        <location evidence="18 26">Cell membrane</location>
        <topology evidence="31">Single-pass type II membrane protein</topology>
    </subcellularLocation>
    <text evidence="22">Also found as a soluble form.</text>
</comment>
<comment type="tissue specificity">
    <text evidence="22">Expressed in epithelial cells of the kidney, intestine, and respiratory tract; granulocytes, monocytes, fibroblasts, endothelial cells, cerebral pericytes at the blood-brain barrier, synaptic membranes of cells in the CNS. Also expressed in endometrial stromal cells, but not in the endometrial glandular cells. Found in the vasculature of tissues that undergo angiogenesis and in malignant gliomas and lymph node metastases from multiple tumor types but not in blood vessels of normal tissues. A soluble form has been found in plasma. It is found to be elevated in plasma and effusions of cancer patients.</text>
</comment>
<comment type="induction">
    <text evidence="8">Estradiol and IL8/interleukin-8 decrease enzymatic activity in vitro in endometrial stromal cells by 40% and 30%, respectively.</text>
</comment>
<comment type="PTM">
    <text evidence="1">Sulfated.</text>
</comment>
<comment type="PTM">
    <text evidence="13 14 15 16 17 26">N- and O-glycosylated.</text>
</comment>
<comment type="PTM">
    <text evidence="22">May undergo proteolysis and give rise to a soluble form.</text>
</comment>
<comment type="miscellaneous">
    <text evidence="7">Found to serve as a receptor for tumor-homing peptides, more specifically NGR peptides. It could serve thus as a target for delivering drugs into tumors. Concentration in human hepatic bile, varies from 17.3 to 57.6 micrograms/ml.</text>
</comment>
<comment type="similarity">
    <text evidence="30">Belongs to the peptidase M1 family.</text>
</comment>
<name>AMPN_HUMAN</name>
<organism>
    <name type="scientific">Homo sapiens</name>
    <name type="common">Human</name>
    <dbReference type="NCBI Taxonomy" id="9606"/>
    <lineage>
        <taxon>Eukaryota</taxon>
        <taxon>Metazoa</taxon>
        <taxon>Chordata</taxon>
        <taxon>Craniata</taxon>
        <taxon>Vertebrata</taxon>
        <taxon>Euteleostomi</taxon>
        <taxon>Mammalia</taxon>
        <taxon>Eutheria</taxon>
        <taxon>Euarchontoglires</taxon>
        <taxon>Primates</taxon>
        <taxon>Haplorrhini</taxon>
        <taxon>Catarrhini</taxon>
        <taxon>Hominidae</taxon>
        <taxon>Homo</taxon>
    </lineage>
</organism>
<feature type="initiator methionine" description="Removed" evidence="18 21 23">
    <location>
        <position position="1"/>
    </location>
</feature>
<feature type="chain" id="PRO_0000095081" description="Aminopeptidase N">
    <location>
        <begin position="2"/>
        <end position="967"/>
    </location>
</feature>
<feature type="topological domain" description="Cytoplasmic" evidence="31">
    <location>
        <begin position="2"/>
        <end position="8"/>
    </location>
</feature>
<feature type="transmembrane region" description="Helical; Signal-anchor for type II membrane protein" evidence="3">
    <location>
        <begin position="9"/>
        <end position="32"/>
    </location>
</feature>
<feature type="topological domain" description="Extracellular" evidence="12">
    <location>
        <begin position="33"/>
        <end position="967"/>
    </location>
</feature>
<feature type="region of interest" description="Cytosolic Ser/Thr-rich junction">
    <location>
        <begin position="33"/>
        <end position="68"/>
    </location>
</feature>
<feature type="region of interest" description="Disordered" evidence="5">
    <location>
        <begin position="40"/>
        <end position="62"/>
    </location>
</feature>
<feature type="region of interest" description="Metalloprotease">
    <location>
        <begin position="69"/>
        <end position="967"/>
    </location>
</feature>
<feature type="region of interest" description="Necessary and sufficient to mediate interaction with HCoV-229E" evidence="12 25">
    <location>
        <begin position="288"/>
        <end position="295"/>
    </location>
</feature>
<feature type="compositionally biased region" description="Low complexity" evidence="5">
    <location>
        <begin position="41"/>
        <end position="62"/>
    </location>
</feature>
<feature type="active site" description="Proton acceptor" evidence="4 17">
    <location>
        <position position="389"/>
    </location>
</feature>
<feature type="binding site" evidence="17">
    <location>
        <begin position="352"/>
        <end position="356"/>
    </location>
    <ligand>
        <name>substrate</name>
    </ligand>
</feature>
<feature type="binding site" evidence="17 32 33 34">
    <location>
        <position position="388"/>
    </location>
    <ligand>
        <name>Zn(2+)</name>
        <dbReference type="ChEBI" id="CHEBI:29105"/>
        <note>catalytic</note>
    </ligand>
</feature>
<feature type="binding site" evidence="17 32 33 34">
    <location>
        <position position="392"/>
    </location>
    <ligand>
        <name>Zn(2+)</name>
        <dbReference type="ChEBI" id="CHEBI:29105"/>
        <note>catalytic</note>
    </ligand>
</feature>
<feature type="binding site" evidence="17 32 33 34">
    <location>
        <position position="411"/>
    </location>
    <ligand>
        <name>Zn(2+)</name>
        <dbReference type="ChEBI" id="CHEBI:29105"/>
        <note>catalytic</note>
    </ligand>
</feature>
<feature type="site" description="Transition state stabilizer" evidence="17">
    <location>
        <position position="477"/>
    </location>
</feature>
<feature type="modified residue" description="Sulfotyrosine" evidence="3">
    <location>
        <position position="176"/>
    </location>
</feature>
<feature type="modified residue" description="Sulfotyrosine" evidence="3">
    <location>
        <position position="419"/>
    </location>
</feature>
<feature type="modified residue" description="Sulfotyrosine" evidence="3">
    <location>
        <position position="424"/>
    </location>
</feature>
<feature type="modified residue" description="Sulfotyrosine" evidence="3">
    <location>
        <position position="913"/>
    </location>
</feature>
<feature type="glycosylation site" description="N-linked (GlcNAc...) asparagine" evidence="14 16 17">
    <location>
        <position position="128"/>
    </location>
</feature>
<feature type="glycosylation site" description="N-linked (GlcNAc...) asparagine" evidence="14 16 17">
    <location>
        <position position="234"/>
    </location>
</feature>
<feature type="glycosylation site" description="N-linked (GlcNAc...) asparagine" evidence="13 14 16 17">
    <location>
        <position position="265"/>
    </location>
</feature>
<feature type="glycosylation site" description="N-linked (GlcNAc...) asparagine" evidence="17">
    <location>
        <position position="319"/>
    </location>
</feature>
<feature type="glycosylation site" description="N-linked (GlcNAc...) asparagine" evidence="17">
    <location>
        <position position="527"/>
    </location>
</feature>
<feature type="glycosylation site" description="N-linked (GlcNAc...) asparagine" evidence="16">
    <location>
        <position position="573"/>
    </location>
</feature>
<feature type="glycosylation site" description="N-linked (GlcNAc...) asparagine" evidence="17">
    <location>
        <position position="625"/>
    </location>
</feature>
<feature type="glycosylation site" description="N-linked (GlcNAc...) asparagine" evidence="14 16 17">
    <location>
        <position position="681"/>
    </location>
</feature>
<feature type="glycosylation site" description="N-linked (GlcNAc...) asparagine">
    <location>
        <position position="735"/>
    </location>
</feature>
<feature type="glycosylation site" description="N-linked (GlcNAc...) asparagine" evidence="14 16 17">
    <location>
        <position position="818"/>
    </location>
</feature>
<feature type="disulfide bond" evidence="17">
    <location>
        <begin position="761"/>
        <end position="768"/>
    </location>
</feature>
<feature type="disulfide bond" evidence="17">
    <location>
        <begin position="798"/>
        <end position="834"/>
    </location>
</feature>
<feature type="sequence variant" id="VAR_031262" description="In dbSNP:rs10152474.">
    <original>V</original>
    <variation>M</variation>
    <location>
        <position position="20"/>
    </location>
</feature>
<feature type="sequence variant" id="VAR_014736" description="In dbSNP:rs25653." evidence="18 19 29">
    <original>R</original>
    <variation>Q</variation>
    <location>
        <position position="86"/>
    </location>
</feature>
<feature type="sequence variant" id="VAR_006727" evidence="28">
    <original>D</original>
    <variation>Y</variation>
    <location>
        <position position="242"/>
    </location>
</feature>
<feature type="sequence variant" id="VAR_006728" evidence="28">
    <original>L</original>
    <variation>P</variation>
    <location>
        <position position="243"/>
    </location>
</feature>
<feature type="sequence variant" id="VAR_031263" description="In dbSNP:rs17240268.">
    <original>A</original>
    <variation>V</variation>
    <location>
        <position position="311"/>
    </location>
</feature>
<feature type="sequence variant" id="VAR_031264" description="In dbSNP:rs8179199.">
    <original>T</original>
    <variation>M</variation>
    <location>
        <position position="321"/>
    </location>
</feature>
<feature type="sequence variant" id="VAR_031265" description="In dbSNP:rs17240212.">
    <original>I</original>
    <variation>K</variation>
    <location>
        <position position="603"/>
    </location>
</feature>
<feature type="sequence variant" id="VAR_031266" description="In dbSNP:rs8192297." evidence="19">
    <original>I</original>
    <variation>M</variation>
    <location>
        <position position="603"/>
    </location>
</feature>
<feature type="sequence variant" id="VAR_014737" description="In dbSNP:rs25651.">
    <original>S</original>
    <variation>N</variation>
    <location>
        <position position="752"/>
    </location>
</feature>
<feature type="mutagenesis site" description="No change in receptor activity and HCoV-229E infection." evidence="9">
    <original>DYVEKQAS</original>
    <variation>QSVEETAQ</variation>
    <location>
        <begin position="288"/>
        <end position="295"/>
    </location>
</feature>
<feature type="mutagenesis site" description="No change in receptor activity and HCoV-229E infection." evidence="9">
    <original>DYVEKQAS</original>
    <variation>QSVNEQAQ</variation>
    <location>
        <begin position="288"/>
        <end position="295"/>
    </location>
</feature>
<feature type="mutagenesis site" description="Complete loss of receptor activity and blocks HCoV-229E infection. No loss of enzymatic activity." evidence="9">
    <original>DYVEKQAS</original>
    <variation>QSVNETAQ</variation>
    <location>
        <begin position="288"/>
        <end position="295"/>
    </location>
</feature>
<feature type="mutagenesis site" description="Complete loss of receptor activity and blocks HCoV-229E infection. No loss of enzymatic activity.">
    <original>EKQ</original>
    <variation>NKT</variation>
    <location>
        <begin position="291"/>
        <end position="293"/>
    </location>
</feature>
<feature type="mutagenesis site" description="No change of receptor activity and HCoV-229E infection.">
    <original>E</original>
    <variation>N</variation>
    <location>
        <position position="291"/>
    </location>
</feature>
<feature type="mutagenesis site" description="No change of receptor activity and HCoV-229E infection.">
    <original>Q</original>
    <variation>T</variation>
    <location>
        <position position="293"/>
    </location>
</feature>
<feature type="mutagenesis site" description="Loss of aminopeptidase activity." evidence="25">
    <original>H</original>
    <variation>A</variation>
    <location>
        <position position="392"/>
    </location>
</feature>
<feature type="mutagenesis site" description="Very low receptor activity and HCoV-229E infection." evidence="9">
    <original>N</original>
    <variation>E</variation>
    <location>
        <position position="818"/>
    </location>
</feature>
<feature type="sequence conflict" description="In Ref. 1; CAA31640." evidence="30" ref="1">
    <original>V</original>
    <variation>E</variation>
    <location>
        <position position="536"/>
    </location>
</feature>
<feature type="sequence conflict" description="In Ref. 1; CAA31640." evidence="30" ref="1">
    <original>L</original>
    <variation>P</variation>
    <location>
        <position position="887"/>
    </location>
</feature>
<feature type="helix" evidence="35">
    <location>
        <begin position="70"/>
        <end position="72"/>
    </location>
</feature>
<feature type="strand" evidence="35">
    <location>
        <begin position="73"/>
        <end position="75"/>
    </location>
</feature>
<feature type="strand" evidence="35">
    <location>
        <begin position="78"/>
        <end position="91"/>
    </location>
</feature>
<feature type="strand" evidence="35">
    <location>
        <begin position="102"/>
        <end position="115"/>
    </location>
</feature>
<feature type="strand" evidence="35">
    <location>
        <begin position="118"/>
        <end position="123"/>
    </location>
</feature>
<feature type="strand" evidence="36">
    <location>
        <begin position="126"/>
        <end position="129"/>
    </location>
</feature>
<feature type="strand" evidence="35">
    <location>
        <begin position="135"/>
        <end position="142"/>
    </location>
</feature>
<feature type="strand" evidence="35">
    <location>
        <begin position="150"/>
        <end position="156"/>
    </location>
</feature>
<feature type="turn" evidence="35">
    <location>
        <begin position="157"/>
        <end position="160"/>
    </location>
</feature>
<feature type="strand" evidence="35">
    <location>
        <begin position="161"/>
        <end position="168"/>
    </location>
</feature>
<feature type="strand" evidence="35">
    <location>
        <begin position="175"/>
        <end position="185"/>
    </location>
</feature>
<feature type="strand" evidence="35">
    <location>
        <begin position="188"/>
        <end position="200"/>
    </location>
</feature>
<feature type="strand" evidence="35">
    <location>
        <begin position="203"/>
        <end position="211"/>
    </location>
</feature>
<feature type="turn" evidence="35">
    <location>
        <begin position="213"/>
        <end position="216"/>
    </location>
</feature>
<feature type="helix" evidence="35">
    <location>
        <begin position="217"/>
        <end position="219"/>
    </location>
</feature>
<feature type="strand" evidence="35">
    <location>
        <begin position="231"/>
        <end position="240"/>
    </location>
</feature>
<feature type="strand" evidence="35">
    <location>
        <begin position="243"/>
        <end position="249"/>
    </location>
</feature>
<feature type="strand" evidence="35">
    <location>
        <begin position="251"/>
        <end position="253"/>
    </location>
</feature>
<feature type="strand" evidence="35">
    <location>
        <begin position="256"/>
        <end position="258"/>
    </location>
</feature>
<feature type="strand" evidence="35">
    <location>
        <begin position="261"/>
        <end position="269"/>
    </location>
</feature>
<feature type="helix" evidence="35">
    <location>
        <begin position="277"/>
        <end position="279"/>
    </location>
</feature>
<feature type="strand" evidence="35">
    <location>
        <begin position="282"/>
        <end position="285"/>
    </location>
</feature>
<feature type="strand" evidence="35">
    <location>
        <begin position="288"/>
        <end position="293"/>
    </location>
</feature>
<feature type="strand" evidence="35">
    <location>
        <begin position="299"/>
        <end position="304"/>
    </location>
</feature>
<feature type="helix" evidence="35">
    <location>
        <begin position="306"/>
        <end position="310"/>
    </location>
</feature>
<feature type="turn" evidence="35">
    <location>
        <begin position="311"/>
        <end position="314"/>
    </location>
</feature>
<feature type="helix" evidence="35">
    <location>
        <begin position="315"/>
        <end position="331"/>
    </location>
</feature>
<feature type="strand" evidence="35">
    <location>
        <begin position="338"/>
        <end position="348"/>
    </location>
</feature>
<feature type="strand" evidence="35">
    <location>
        <begin position="350"/>
        <end position="354"/>
    </location>
</feature>
<feature type="strand" evidence="35">
    <location>
        <begin position="359"/>
        <end position="363"/>
    </location>
</feature>
<feature type="helix" evidence="35">
    <location>
        <begin position="364"/>
        <end position="367"/>
    </location>
</feature>
<feature type="turn" evidence="35">
    <location>
        <begin position="371"/>
        <end position="373"/>
    </location>
</feature>
<feature type="helix" evidence="35">
    <location>
        <begin position="376"/>
        <end position="394"/>
    </location>
</feature>
<feature type="turn" evidence="35">
    <location>
        <begin position="396"/>
        <end position="398"/>
    </location>
</feature>
<feature type="strand" evidence="35">
    <location>
        <begin position="399"/>
        <end position="403"/>
    </location>
</feature>
<feature type="helix" evidence="35">
    <location>
        <begin position="404"/>
        <end position="407"/>
    </location>
</feature>
<feature type="helix" evidence="35">
    <location>
        <begin position="408"/>
        <end position="425"/>
    </location>
</feature>
<feature type="helix" evidence="35">
    <location>
        <begin position="427"/>
        <end position="429"/>
    </location>
</feature>
<feature type="helix" evidence="35">
    <location>
        <begin position="431"/>
        <end position="434"/>
    </location>
</feature>
<feature type="helix" evidence="35">
    <location>
        <begin position="435"/>
        <end position="438"/>
    </location>
</feature>
<feature type="helix" evidence="35">
    <location>
        <begin position="440"/>
        <end position="447"/>
    </location>
</feature>
<feature type="helix" evidence="35">
    <location>
        <begin position="459"/>
        <end position="461"/>
    </location>
</feature>
<feature type="helix" evidence="35">
    <location>
        <begin position="465"/>
        <end position="470"/>
    </location>
</feature>
<feature type="helix" evidence="35">
    <location>
        <begin position="474"/>
        <end position="491"/>
    </location>
</feature>
<feature type="helix" evidence="35">
    <location>
        <begin position="493"/>
        <end position="507"/>
    </location>
</feature>
<feature type="strand" evidence="35">
    <location>
        <begin position="510"/>
        <end position="512"/>
    </location>
</feature>
<feature type="helix" evidence="35">
    <location>
        <begin position="514"/>
        <end position="527"/>
    </location>
</feature>
<feature type="helix" evidence="35">
    <location>
        <begin position="536"/>
        <end position="544"/>
    </location>
</feature>
<feature type="strand" evidence="35">
    <location>
        <begin position="550"/>
        <end position="555"/>
    </location>
</feature>
<feature type="turn" evidence="35">
    <location>
        <begin position="556"/>
        <end position="559"/>
    </location>
</feature>
<feature type="strand" evidence="35">
    <location>
        <begin position="560"/>
        <end position="565"/>
    </location>
</feature>
<feature type="turn" evidence="35">
    <location>
        <begin position="579"/>
        <end position="582"/>
    </location>
</feature>
<feature type="strand" evidence="35">
    <location>
        <begin position="586"/>
        <end position="588"/>
    </location>
</feature>
<feature type="strand" evidence="35">
    <location>
        <begin position="590"/>
        <end position="592"/>
    </location>
</feature>
<feature type="strand" evidence="35">
    <location>
        <begin position="600"/>
        <end position="602"/>
    </location>
</feature>
<feature type="strand" evidence="35">
    <location>
        <begin position="604"/>
        <end position="608"/>
    </location>
</feature>
<feature type="helix" evidence="35">
    <location>
        <begin position="610"/>
        <end position="612"/>
    </location>
</feature>
<feature type="strand" evidence="35">
    <location>
        <begin position="620"/>
        <end position="623"/>
    </location>
</feature>
<feature type="helix" evidence="35">
    <location>
        <begin position="624"/>
        <end position="626"/>
    </location>
</feature>
<feature type="strand" evidence="35">
    <location>
        <begin position="631"/>
        <end position="634"/>
    </location>
</feature>
<feature type="helix" evidence="35">
    <location>
        <begin position="636"/>
        <end position="649"/>
    </location>
</feature>
<feature type="helix" evidence="35">
    <location>
        <begin position="650"/>
        <end position="652"/>
    </location>
</feature>
<feature type="helix" evidence="35">
    <location>
        <begin position="655"/>
        <end position="670"/>
    </location>
</feature>
<feature type="helix" evidence="35">
    <location>
        <begin position="676"/>
        <end position="681"/>
    </location>
</feature>
<feature type="helix" evidence="35">
    <location>
        <begin position="682"/>
        <end position="688"/>
    </location>
</feature>
<feature type="helix" evidence="35">
    <location>
        <begin position="692"/>
        <end position="709"/>
    </location>
</feature>
<feature type="helix" evidence="35">
    <location>
        <begin position="715"/>
        <end position="736"/>
    </location>
</feature>
<feature type="turn" evidence="35">
    <location>
        <begin position="737"/>
        <end position="741"/>
    </location>
</feature>
<feature type="strand" evidence="37">
    <location>
        <begin position="742"/>
        <end position="746"/>
    </location>
</feature>
<feature type="helix" evidence="35">
    <location>
        <begin position="747"/>
        <end position="762"/>
    </location>
</feature>
<feature type="helix" evidence="35">
    <location>
        <begin position="766"/>
        <end position="781"/>
    </location>
</feature>
<feature type="helix" evidence="35">
    <location>
        <begin position="790"/>
        <end position="792"/>
    </location>
</feature>
<feature type="helix" evidence="35">
    <location>
        <begin position="793"/>
        <end position="803"/>
    </location>
</feature>
<feature type="helix" evidence="35">
    <location>
        <begin position="806"/>
        <end position="817"/>
    </location>
</feature>
<feature type="helix" evidence="35">
    <location>
        <begin position="822"/>
        <end position="832"/>
    </location>
</feature>
<feature type="helix" evidence="35">
    <location>
        <begin position="838"/>
        <end position="848"/>
    </location>
</feature>
<feature type="turn" evidence="35">
    <location>
        <begin position="851"/>
        <end position="853"/>
    </location>
</feature>
<feature type="helix" evidence="35">
    <location>
        <begin position="856"/>
        <end position="858"/>
    </location>
</feature>
<feature type="helix" evidence="35">
    <location>
        <begin position="859"/>
        <end position="868"/>
    </location>
</feature>
<feature type="helix" evidence="35">
    <location>
        <begin position="872"/>
        <end position="882"/>
    </location>
</feature>
<feature type="helix" evidence="35">
    <location>
        <begin position="884"/>
        <end position="890"/>
    </location>
</feature>
<feature type="turn" evidence="35">
    <location>
        <begin position="891"/>
        <end position="894"/>
    </location>
</feature>
<feature type="helix" evidence="35">
    <location>
        <begin position="898"/>
        <end position="906"/>
    </location>
</feature>
<feature type="helix" evidence="35">
    <location>
        <begin position="912"/>
        <end position="924"/>
    </location>
</feature>
<feature type="turn" evidence="35">
    <location>
        <begin position="925"/>
        <end position="928"/>
    </location>
</feature>
<feature type="helix" evidence="35">
    <location>
        <begin position="931"/>
        <end position="933"/>
    </location>
</feature>
<feature type="helix" evidence="35">
    <location>
        <begin position="934"/>
        <end position="965"/>
    </location>
</feature>
<dbReference type="EC" id="3.4.11.2" evidence="17 20 21 25"/>
<dbReference type="EMBL" id="X13276">
    <property type="protein sequence ID" value="CAA31640.1"/>
    <property type="molecule type" value="mRNA"/>
</dbReference>
<dbReference type="EMBL" id="M22324">
    <property type="protein sequence ID" value="AAA51719.1"/>
    <property type="molecule type" value="mRNA"/>
</dbReference>
<dbReference type="EMBL" id="AC018988">
    <property type="status" value="NOT_ANNOTATED_CDS"/>
    <property type="molecule type" value="Genomic_DNA"/>
</dbReference>
<dbReference type="EMBL" id="AC079075">
    <property type="status" value="NOT_ANNOTATED_CDS"/>
    <property type="molecule type" value="Genomic_DNA"/>
</dbReference>
<dbReference type="EMBL" id="BC058928">
    <property type="protein sequence ID" value="AAH58928.1"/>
    <property type="molecule type" value="mRNA"/>
</dbReference>
<dbReference type="EMBL" id="M55522">
    <property type="protein sequence ID" value="AAA83399.1"/>
    <property type="molecule type" value="Genomic_DNA"/>
</dbReference>
<dbReference type="EMBL" id="AJ421875">
    <property type="protein sequence ID" value="CAD19098.2"/>
    <property type="molecule type" value="Genomic_DNA"/>
</dbReference>
<dbReference type="EMBL" id="AJ421876">
    <property type="protein sequence ID" value="CAD19098.2"/>
    <property type="status" value="JOINED"/>
    <property type="molecule type" value="Genomic_DNA"/>
</dbReference>
<dbReference type="EMBL" id="AJ426050">
    <property type="protein sequence ID" value="CAD19802.1"/>
    <property type="molecule type" value="Genomic_DNA"/>
</dbReference>
<dbReference type="EMBL" id="AJ427985">
    <property type="protein sequence ID" value="CAD20931.1"/>
    <property type="molecule type" value="Genomic_DNA"/>
</dbReference>
<dbReference type="EMBL" id="AJ427986">
    <property type="protein sequence ID" value="CAD20931.1"/>
    <property type="status" value="JOINED"/>
    <property type="molecule type" value="Genomic_DNA"/>
</dbReference>
<dbReference type="EMBL" id="AJ427987">
    <property type="protein sequence ID" value="CAD20931.1"/>
    <property type="status" value="JOINED"/>
    <property type="molecule type" value="Genomic_DNA"/>
</dbReference>
<dbReference type="EMBL" id="AJ427988">
    <property type="protein sequence ID" value="CAD20931.1"/>
    <property type="status" value="JOINED"/>
    <property type="molecule type" value="Genomic_DNA"/>
</dbReference>
<dbReference type="CCDS" id="CCDS10356.1"/>
<dbReference type="PIR" id="A30325">
    <property type="entry name" value="A30325"/>
</dbReference>
<dbReference type="RefSeq" id="NP_001141.2">
    <property type="nucleotide sequence ID" value="NM_001150.3"/>
</dbReference>
<dbReference type="RefSeq" id="NP_001368852.1">
    <property type="nucleotide sequence ID" value="NM_001381923.1"/>
</dbReference>
<dbReference type="RefSeq" id="NP_001368853.1">
    <property type="nucleotide sequence ID" value="NM_001381924.1"/>
</dbReference>
<dbReference type="RefSeq" id="XP_005254949.1">
    <property type="nucleotide sequence ID" value="XM_005254892.4"/>
</dbReference>
<dbReference type="RefSeq" id="XP_011519775.1">
    <property type="nucleotide sequence ID" value="XM_011521473.1"/>
</dbReference>
<dbReference type="PDB" id="4FYQ">
    <property type="method" value="X-ray"/>
    <property type="resolution" value="1.90 A"/>
    <property type="chains" value="A=66-967"/>
</dbReference>
<dbReference type="PDB" id="4FYR">
    <property type="method" value="X-ray"/>
    <property type="resolution" value="1.91 A"/>
    <property type="chains" value="A=66-967"/>
</dbReference>
<dbReference type="PDB" id="4FYS">
    <property type="method" value="X-ray"/>
    <property type="resolution" value="2.01 A"/>
    <property type="chains" value="A=66-967"/>
</dbReference>
<dbReference type="PDB" id="4FYT">
    <property type="method" value="X-ray"/>
    <property type="resolution" value="1.85 A"/>
    <property type="chains" value="A=66-967"/>
</dbReference>
<dbReference type="PDB" id="5LHD">
    <property type="method" value="X-ray"/>
    <property type="resolution" value="2.60 A"/>
    <property type="chains" value="A/B/C/D=36-967"/>
</dbReference>
<dbReference type="PDB" id="6ATK">
    <property type="method" value="X-ray"/>
    <property type="resolution" value="3.50 A"/>
    <property type="chains" value="A/B/C=66-967"/>
</dbReference>
<dbReference type="PDB" id="6U7E">
    <property type="method" value="X-ray"/>
    <property type="resolution" value="3.00 A"/>
    <property type="chains" value="A/B=66-967"/>
</dbReference>
<dbReference type="PDB" id="6U7F">
    <property type="method" value="X-ray"/>
    <property type="resolution" value="2.75 A"/>
    <property type="chains" value="A/B=66-967"/>
</dbReference>
<dbReference type="PDB" id="6U7G">
    <property type="method" value="X-ray"/>
    <property type="resolution" value="2.35 A"/>
    <property type="chains" value="A/B=66-967"/>
</dbReference>
<dbReference type="PDB" id="6XWD">
    <property type="method" value="X-ray"/>
    <property type="resolution" value="1.60 A"/>
    <property type="chains" value="P=38-46"/>
</dbReference>
<dbReference type="PDB" id="7AEW">
    <property type="method" value="X-ray"/>
    <property type="resolution" value="1.20 A"/>
    <property type="chains" value="BBB/CCC=36-73"/>
</dbReference>
<dbReference type="PDB" id="7VPQ">
    <property type="method" value="X-ray"/>
    <property type="resolution" value="3.10 A"/>
    <property type="chains" value="A/C/E=62-963"/>
</dbReference>
<dbReference type="PDB" id="8WDE">
    <property type="method" value="EM"/>
    <property type="resolution" value="3.60 A"/>
    <property type="chains" value="D/E=66-967"/>
</dbReference>
<dbReference type="PDBsum" id="4FYQ"/>
<dbReference type="PDBsum" id="4FYR"/>
<dbReference type="PDBsum" id="4FYS"/>
<dbReference type="PDBsum" id="4FYT"/>
<dbReference type="PDBsum" id="5LHD"/>
<dbReference type="PDBsum" id="6ATK"/>
<dbReference type="PDBsum" id="6U7E"/>
<dbReference type="PDBsum" id="6U7F"/>
<dbReference type="PDBsum" id="6U7G"/>
<dbReference type="PDBsum" id="6XWD"/>
<dbReference type="PDBsum" id="7AEW"/>
<dbReference type="PDBsum" id="7VPQ"/>
<dbReference type="PDBsum" id="8WDE"/>
<dbReference type="EMDB" id="EMD-37462"/>
<dbReference type="SMR" id="P15144"/>
<dbReference type="BioGRID" id="106787">
    <property type="interactions" value="179"/>
</dbReference>
<dbReference type="FunCoup" id="P15144">
    <property type="interactions" value="356"/>
</dbReference>
<dbReference type="IntAct" id="P15144">
    <property type="interactions" value="13"/>
</dbReference>
<dbReference type="MINT" id="P15144"/>
<dbReference type="STRING" id="9606.ENSP00000300060"/>
<dbReference type="BindingDB" id="P15144"/>
<dbReference type="ChEMBL" id="CHEMBL1907"/>
<dbReference type="DrugBank" id="DB00973">
    <property type="generic name" value="Ezetimibe"/>
</dbReference>
<dbReference type="DrugBank" id="DB06773">
    <property type="generic name" value="Human calcitonin"/>
</dbReference>
<dbReference type="DrugBank" id="DB06196">
    <property type="generic name" value="Icatibant"/>
</dbReference>
<dbReference type="DrugBank" id="DB08040">
    <property type="generic name" value="Kelatorphan"/>
</dbReference>
<dbReference type="DrugBank" id="DB16627">
    <property type="generic name" value="Melphalan flufenamide"/>
</dbReference>
<dbReference type="DrugCentral" id="P15144"/>
<dbReference type="GuidetoPHARMACOLOGY" id="1560"/>
<dbReference type="MEROPS" id="M01.001"/>
<dbReference type="GlyConnect" id="815">
    <property type="glycosylation" value="35 N-Linked glycans (6 sites)"/>
</dbReference>
<dbReference type="GlyCosmos" id="P15144">
    <property type="glycosylation" value="15 sites, 51 glycans"/>
</dbReference>
<dbReference type="GlyGen" id="P15144">
    <property type="glycosylation" value="18 sites, 188 N-linked glycans (8 sites), 9 O-linked glycans (5 sites)"/>
</dbReference>
<dbReference type="iPTMnet" id="P15144"/>
<dbReference type="MetOSite" id="P15144"/>
<dbReference type="PhosphoSitePlus" id="P15144"/>
<dbReference type="SwissPalm" id="P15144"/>
<dbReference type="BioMuta" id="ANPEP"/>
<dbReference type="DMDM" id="143811362"/>
<dbReference type="CPTAC" id="CPTAC-460"/>
<dbReference type="CPTAC" id="CPTAC-461"/>
<dbReference type="jPOST" id="P15144"/>
<dbReference type="MassIVE" id="P15144"/>
<dbReference type="PaxDb" id="9606-ENSP00000300060"/>
<dbReference type="PeptideAtlas" id="P15144"/>
<dbReference type="ProteomicsDB" id="53109"/>
<dbReference type="Pumba" id="P15144"/>
<dbReference type="ABCD" id="P15144">
    <property type="antibodies" value="5 sequenced antibodies"/>
</dbReference>
<dbReference type="Antibodypedia" id="3713">
    <property type="antibodies" value="1993 antibodies from 48 providers"/>
</dbReference>
<dbReference type="DNASU" id="290"/>
<dbReference type="Ensembl" id="ENST00000300060.7">
    <property type="protein sequence ID" value="ENSP00000300060.6"/>
    <property type="gene ID" value="ENSG00000166825.15"/>
</dbReference>
<dbReference type="Ensembl" id="ENST00000559874.2">
    <property type="protein sequence ID" value="ENSP00000452934.2"/>
    <property type="gene ID" value="ENSG00000166825.15"/>
</dbReference>
<dbReference type="Ensembl" id="ENST00000560137.2">
    <property type="protein sequence ID" value="ENSP00000453413.2"/>
    <property type="gene ID" value="ENSG00000166825.15"/>
</dbReference>
<dbReference type="Ensembl" id="ENST00000679248.1">
    <property type="protein sequence ID" value="ENSP00000502886.1"/>
    <property type="gene ID" value="ENSG00000166825.15"/>
</dbReference>
<dbReference type="GeneID" id="290"/>
<dbReference type="KEGG" id="hsa:290"/>
<dbReference type="MANE-Select" id="ENST00000300060.7">
    <property type="protein sequence ID" value="ENSP00000300060.6"/>
    <property type="RefSeq nucleotide sequence ID" value="NM_001150.3"/>
    <property type="RefSeq protein sequence ID" value="NP_001141.2"/>
</dbReference>
<dbReference type="UCSC" id="uc002bop.5">
    <property type="organism name" value="human"/>
</dbReference>
<dbReference type="AGR" id="HGNC:500"/>
<dbReference type="CTD" id="290"/>
<dbReference type="DisGeNET" id="290"/>
<dbReference type="GeneCards" id="ANPEP"/>
<dbReference type="HGNC" id="HGNC:500">
    <property type="gene designation" value="ANPEP"/>
</dbReference>
<dbReference type="HPA" id="ENSG00000166825">
    <property type="expression patterns" value="Group enriched (intestine, pancreas)"/>
</dbReference>
<dbReference type="MIM" id="151530">
    <property type="type" value="gene"/>
</dbReference>
<dbReference type="neXtProt" id="NX_P15144"/>
<dbReference type="OpenTargets" id="ENSG00000166825"/>
<dbReference type="PharmGKB" id="PA24815"/>
<dbReference type="VEuPathDB" id="HostDB:ENSG00000166825"/>
<dbReference type="eggNOG" id="KOG1046">
    <property type="taxonomic scope" value="Eukaryota"/>
</dbReference>
<dbReference type="GeneTree" id="ENSGT00940000154876"/>
<dbReference type="HOGENOM" id="CLU_003705_2_0_1"/>
<dbReference type="InParanoid" id="P15144"/>
<dbReference type="OMA" id="EETEYMP"/>
<dbReference type="OrthoDB" id="510539at2759"/>
<dbReference type="PAN-GO" id="P15144">
    <property type="GO annotations" value="9 GO annotations based on evolutionary models"/>
</dbReference>
<dbReference type="PhylomeDB" id="P15144"/>
<dbReference type="TreeFam" id="TF300395"/>
<dbReference type="BRENDA" id="3.4.11.2">
    <property type="organism ID" value="2681"/>
</dbReference>
<dbReference type="PathwayCommons" id="P15144"/>
<dbReference type="Reactome" id="R-HSA-2022377">
    <property type="pathway name" value="Metabolism of Angiotensinogen to Angiotensins"/>
</dbReference>
<dbReference type="Reactome" id="R-HSA-6798695">
    <property type="pathway name" value="Neutrophil degranulation"/>
</dbReference>
<dbReference type="SABIO-RK" id="P15144"/>
<dbReference type="SignaLink" id="P15144"/>
<dbReference type="SIGNOR" id="P15144"/>
<dbReference type="BioGRID-ORCS" id="290">
    <property type="hits" value="10 hits in 1157 CRISPR screens"/>
</dbReference>
<dbReference type="ChiTaRS" id="ANPEP">
    <property type="organism name" value="human"/>
</dbReference>
<dbReference type="EvolutionaryTrace" id="P15144"/>
<dbReference type="GeneWiki" id="Alanine_aminopeptidase"/>
<dbReference type="GenomeRNAi" id="290"/>
<dbReference type="Pharos" id="P15144">
    <property type="development level" value="Tchem"/>
</dbReference>
<dbReference type="PRO" id="PR:P15144"/>
<dbReference type="Proteomes" id="UP000005640">
    <property type="component" value="Chromosome 15"/>
</dbReference>
<dbReference type="RNAct" id="P15144">
    <property type="molecule type" value="protein"/>
</dbReference>
<dbReference type="Bgee" id="ENSG00000166825">
    <property type="expression patterns" value="Expressed in jejunal mucosa and 148 other cell types or tissues"/>
</dbReference>
<dbReference type="ExpressionAtlas" id="P15144">
    <property type="expression patterns" value="baseline and differential"/>
</dbReference>
<dbReference type="GO" id="GO:0005737">
    <property type="term" value="C:cytoplasm"/>
    <property type="evidence" value="ECO:0000318"/>
    <property type="project" value="GO_Central"/>
</dbReference>
<dbReference type="GO" id="GO:0005793">
    <property type="term" value="C:endoplasmic reticulum-Golgi intermediate compartment"/>
    <property type="evidence" value="ECO:0000314"/>
    <property type="project" value="UniProtKB"/>
</dbReference>
<dbReference type="GO" id="GO:0009897">
    <property type="term" value="C:external side of plasma membrane"/>
    <property type="evidence" value="ECO:0007669"/>
    <property type="project" value="Ensembl"/>
</dbReference>
<dbReference type="GO" id="GO:0070062">
    <property type="term" value="C:extracellular exosome"/>
    <property type="evidence" value="ECO:0000314"/>
    <property type="project" value="UniProtKB"/>
</dbReference>
<dbReference type="GO" id="GO:0005615">
    <property type="term" value="C:extracellular space"/>
    <property type="evidence" value="ECO:0000314"/>
    <property type="project" value="UniProtKB"/>
</dbReference>
<dbReference type="GO" id="GO:0005765">
    <property type="term" value="C:lysosomal membrane"/>
    <property type="evidence" value="ECO:0007005"/>
    <property type="project" value="UniProtKB"/>
</dbReference>
<dbReference type="GO" id="GO:0005886">
    <property type="term" value="C:plasma membrane"/>
    <property type="evidence" value="ECO:0000314"/>
    <property type="project" value="UniProtKB"/>
</dbReference>
<dbReference type="GO" id="GO:0030667">
    <property type="term" value="C:secretory granule membrane"/>
    <property type="evidence" value="ECO:0000304"/>
    <property type="project" value="Reactome"/>
</dbReference>
<dbReference type="GO" id="GO:0016285">
    <property type="term" value="F:alanyl aminopeptidase activity"/>
    <property type="evidence" value="ECO:0007669"/>
    <property type="project" value="UniProtKB-EC"/>
</dbReference>
<dbReference type="GO" id="GO:0004177">
    <property type="term" value="F:aminopeptidase activity"/>
    <property type="evidence" value="ECO:0000304"/>
    <property type="project" value="ProtInc"/>
</dbReference>
<dbReference type="GO" id="GO:0070006">
    <property type="term" value="F:metalloaminopeptidase activity"/>
    <property type="evidence" value="ECO:0000318"/>
    <property type="project" value="GO_Central"/>
</dbReference>
<dbReference type="GO" id="GO:0008237">
    <property type="term" value="F:metallopeptidase activity"/>
    <property type="evidence" value="ECO:0000304"/>
    <property type="project" value="ProtInc"/>
</dbReference>
<dbReference type="GO" id="GO:0042277">
    <property type="term" value="F:peptide binding"/>
    <property type="evidence" value="ECO:0000318"/>
    <property type="project" value="GO_Central"/>
</dbReference>
<dbReference type="GO" id="GO:0038023">
    <property type="term" value="F:signaling receptor activity"/>
    <property type="evidence" value="ECO:0000304"/>
    <property type="project" value="ProtInc"/>
</dbReference>
<dbReference type="GO" id="GO:0001618">
    <property type="term" value="F:virus receptor activity"/>
    <property type="evidence" value="ECO:0007669"/>
    <property type="project" value="UniProtKB-KW"/>
</dbReference>
<dbReference type="GO" id="GO:0008270">
    <property type="term" value="F:zinc ion binding"/>
    <property type="evidence" value="ECO:0000318"/>
    <property type="project" value="GO_Central"/>
</dbReference>
<dbReference type="GO" id="GO:0001525">
    <property type="term" value="P:angiogenesis"/>
    <property type="evidence" value="ECO:0007669"/>
    <property type="project" value="UniProtKB-KW"/>
</dbReference>
<dbReference type="GO" id="GO:0002003">
    <property type="term" value="P:angiotensin maturation"/>
    <property type="evidence" value="ECO:0007669"/>
    <property type="project" value="Ensembl"/>
</dbReference>
<dbReference type="GO" id="GO:0030154">
    <property type="term" value="P:cell differentiation"/>
    <property type="evidence" value="ECO:0007669"/>
    <property type="project" value="UniProtKB-KW"/>
</dbReference>
<dbReference type="GO" id="GO:0043171">
    <property type="term" value="P:peptide catabolic process"/>
    <property type="evidence" value="ECO:0000318"/>
    <property type="project" value="GO_Central"/>
</dbReference>
<dbReference type="GO" id="GO:0006508">
    <property type="term" value="P:proteolysis"/>
    <property type="evidence" value="ECO:0000318"/>
    <property type="project" value="GO_Central"/>
</dbReference>
<dbReference type="CDD" id="cd09601">
    <property type="entry name" value="M1_APN-Q_like"/>
    <property type="match status" value="1"/>
</dbReference>
<dbReference type="FunFam" id="2.60.40.1910:FF:000005">
    <property type="entry name" value="Aminopeptidase"/>
    <property type="match status" value="1"/>
</dbReference>
<dbReference type="FunFam" id="1.25.50.20:FF:000012">
    <property type="entry name" value="Aminopeptidase N"/>
    <property type="match status" value="1"/>
</dbReference>
<dbReference type="FunFam" id="2.60.40.1730:FF:000012">
    <property type="entry name" value="Aminopeptidase N"/>
    <property type="match status" value="1"/>
</dbReference>
<dbReference type="FunFam" id="1.10.390.10:FF:000016">
    <property type="entry name" value="Glutamyl aminopeptidase"/>
    <property type="match status" value="1"/>
</dbReference>
<dbReference type="Gene3D" id="1.25.50.20">
    <property type="match status" value="1"/>
</dbReference>
<dbReference type="Gene3D" id="2.60.40.1910">
    <property type="match status" value="1"/>
</dbReference>
<dbReference type="Gene3D" id="1.10.390.10">
    <property type="entry name" value="Neutral Protease Domain 2"/>
    <property type="match status" value="1"/>
</dbReference>
<dbReference type="Gene3D" id="2.60.40.1730">
    <property type="entry name" value="tricorn interacting facor f3 domain"/>
    <property type="match status" value="1"/>
</dbReference>
<dbReference type="InterPro" id="IPR045357">
    <property type="entry name" value="Aminopeptidase_N-like_N"/>
</dbReference>
<dbReference type="InterPro" id="IPR042097">
    <property type="entry name" value="Aminopeptidase_N-like_N_sf"/>
</dbReference>
<dbReference type="InterPro" id="IPR024571">
    <property type="entry name" value="ERAP1-like_C_dom"/>
</dbReference>
<dbReference type="InterPro" id="IPR034016">
    <property type="entry name" value="M1_APN-typ"/>
</dbReference>
<dbReference type="InterPro" id="IPR001930">
    <property type="entry name" value="Peptidase_M1"/>
</dbReference>
<dbReference type="InterPro" id="IPR050344">
    <property type="entry name" value="Peptidase_M1_aminopeptidases"/>
</dbReference>
<dbReference type="InterPro" id="IPR014782">
    <property type="entry name" value="Peptidase_M1_dom"/>
</dbReference>
<dbReference type="InterPro" id="IPR027268">
    <property type="entry name" value="Peptidase_M4/M1_CTD_sf"/>
</dbReference>
<dbReference type="PANTHER" id="PTHR11533:SF172">
    <property type="entry name" value="AMINOPEPTIDASE N"/>
    <property type="match status" value="1"/>
</dbReference>
<dbReference type="PANTHER" id="PTHR11533">
    <property type="entry name" value="PROTEASE M1 ZINC METALLOPROTEASE"/>
    <property type="match status" value="1"/>
</dbReference>
<dbReference type="Pfam" id="PF11838">
    <property type="entry name" value="ERAP1_C"/>
    <property type="match status" value="1"/>
</dbReference>
<dbReference type="Pfam" id="PF01433">
    <property type="entry name" value="Peptidase_M1"/>
    <property type="match status" value="1"/>
</dbReference>
<dbReference type="Pfam" id="PF17900">
    <property type="entry name" value="Peptidase_M1_N"/>
    <property type="match status" value="1"/>
</dbReference>
<dbReference type="PRINTS" id="PR00756">
    <property type="entry name" value="ALADIPTASE"/>
</dbReference>
<dbReference type="SUPFAM" id="SSF63737">
    <property type="entry name" value="Leukotriene A4 hydrolase N-terminal domain"/>
    <property type="match status" value="1"/>
</dbReference>
<dbReference type="SUPFAM" id="SSF55486">
    <property type="entry name" value="Metalloproteases ('zincins'), catalytic domain"/>
    <property type="match status" value="1"/>
</dbReference>
<dbReference type="PROSITE" id="PS00142">
    <property type="entry name" value="ZINC_PROTEASE"/>
    <property type="match status" value="1"/>
</dbReference>
<accession>P15144</accession>
<accession>Q16728</accession>
<accession>Q6GT90</accession>
<accession>Q8IUK3</accession>
<accession>Q8IVH3</accession>
<accession>Q9UCE0</accession>
<keyword id="KW-0002">3D-structure</keyword>
<keyword id="KW-0031">Aminopeptidase</keyword>
<keyword id="KW-0037">Angiogenesis</keyword>
<keyword id="KW-1003">Cell membrane</keyword>
<keyword id="KW-0217">Developmental protein</keyword>
<keyword id="KW-0221">Differentiation</keyword>
<keyword id="KW-0903">Direct protein sequencing</keyword>
<keyword id="KW-1015">Disulfide bond</keyword>
<keyword id="KW-0325">Glycoprotein</keyword>
<keyword id="KW-1183">Host cell receptor for virus entry</keyword>
<keyword id="KW-0945">Host-virus interaction</keyword>
<keyword id="KW-0378">Hydrolase</keyword>
<keyword id="KW-0472">Membrane</keyword>
<keyword id="KW-0479">Metal-binding</keyword>
<keyword id="KW-0482">Metalloprotease</keyword>
<keyword id="KW-0645">Protease</keyword>
<keyword id="KW-1267">Proteomics identification</keyword>
<keyword id="KW-0675">Receptor</keyword>
<keyword id="KW-1185">Reference proteome</keyword>
<keyword id="KW-0735">Signal-anchor</keyword>
<keyword id="KW-0765">Sulfation</keyword>
<keyword id="KW-0812">Transmembrane</keyword>
<keyword id="KW-1133">Transmembrane helix</keyword>
<keyword id="KW-0862">Zinc</keyword>